<name>Y6090_DICDI</name>
<gene>
    <name type="ORF">DDB_G0280641</name>
</gene>
<organism>
    <name type="scientific">Dictyostelium discoideum</name>
    <name type="common">Social amoeba</name>
    <dbReference type="NCBI Taxonomy" id="44689"/>
    <lineage>
        <taxon>Eukaryota</taxon>
        <taxon>Amoebozoa</taxon>
        <taxon>Evosea</taxon>
        <taxon>Eumycetozoa</taxon>
        <taxon>Dictyostelia</taxon>
        <taxon>Dictyosteliales</taxon>
        <taxon>Dictyosteliaceae</taxon>
        <taxon>Dictyostelium</taxon>
    </lineage>
</organism>
<reference key="1">
    <citation type="journal article" date="2005" name="Nature">
        <title>The genome of the social amoeba Dictyostelium discoideum.</title>
        <authorList>
            <person name="Eichinger L."/>
            <person name="Pachebat J.A."/>
            <person name="Gloeckner G."/>
            <person name="Rajandream M.A."/>
            <person name="Sucgang R."/>
            <person name="Berriman M."/>
            <person name="Song J."/>
            <person name="Olsen R."/>
            <person name="Szafranski K."/>
            <person name="Xu Q."/>
            <person name="Tunggal B."/>
            <person name="Kummerfeld S."/>
            <person name="Madera M."/>
            <person name="Konfortov B.A."/>
            <person name="Rivero F."/>
            <person name="Bankier A.T."/>
            <person name="Lehmann R."/>
            <person name="Hamlin N."/>
            <person name="Davies R."/>
            <person name="Gaudet P."/>
            <person name="Fey P."/>
            <person name="Pilcher K."/>
            <person name="Chen G."/>
            <person name="Saunders D."/>
            <person name="Sodergren E.J."/>
            <person name="Davis P."/>
            <person name="Kerhornou A."/>
            <person name="Nie X."/>
            <person name="Hall N."/>
            <person name="Anjard C."/>
            <person name="Hemphill L."/>
            <person name="Bason N."/>
            <person name="Farbrother P."/>
            <person name="Desany B."/>
            <person name="Just E."/>
            <person name="Morio T."/>
            <person name="Rost R."/>
            <person name="Churcher C.M."/>
            <person name="Cooper J."/>
            <person name="Haydock S."/>
            <person name="van Driessche N."/>
            <person name="Cronin A."/>
            <person name="Goodhead I."/>
            <person name="Muzny D.M."/>
            <person name="Mourier T."/>
            <person name="Pain A."/>
            <person name="Lu M."/>
            <person name="Harper D."/>
            <person name="Lindsay R."/>
            <person name="Hauser H."/>
            <person name="James K.D."/>
            <person name="Quiles M."/>
            <person name="Madan Babu M."/>
            <person name="Saito T."/>
            <person name="Buchrieser C."/>
            <person name="Wardroper A."/>
            <person name="Felder M."/>
            <person name="Thangavelu M."/>
            <person name="Johnson D."/>
            <person name="Knights A."/>
            <person name="Loulseged H."/>
            <person name="Mungall K.L."/>
            <person name="Oliver K."/>
            <person name="Price C."/>
            <person name="Quail M.A."/>
            <person name="Urushihara H."/>
            <person name="Hernandez J."/>
            <person name="Rabbinowitsch E."/>
            <person name="Steffen D."/>
            <person name="Sanders M."/>
            <person name="Ma J."/>
            <person name="Kohara Y."/>
            <person name="Sharp S."/>
            <person name="Simmonds M.N."/>
            <person name="Spiegler S."/>
            <person name="Tivey A."/>
            <person name="Sugano S."/>
            <person name="White B."/>
            <person name="Walker D."/>
            <person name="Woodward J.R."/>
            <person name="Winckler T."/>
            <person name="Tanaka Y."/>
            <person name="Shaulsky G."/>
            <person name="Schleicher M."/>
            <person name="Weinstock G.M."/>
            <person name="Rosenthal A."/>
            <person name="Cox E.C."/>
            <person name="Chisholm R.L."/>
            <person name="Gibbs R.A."/>
            <person name="Loomis W.F."/>
            <person name="Platzer M."/>
            <person name="Kay R.R."/>
            <person name="Williams J.G."/>
            <person name="Dear P.H."/>
            <person name="Noegel A.A."/>
            <person name="Barrell B.G."/>
            <person name="Kuspa A."/>
        </authorList>
    </citation>
    <scope>NUCLEOTIDE SEQUENCE [LARGE SCALE GENOMIC DNA]</scope>
    <source>
        <strain>AX4</strain>
    </source>
</reference>
<keyword id="KW-1185">Reference proteome</keyword>
<dbReference type="EMBL" id="AAFI02000037">
    <property type="protein sequence ID" value="EAL67122.1"/>
    <property type="molecule type" value="Genomic_DNA"/>
</dbReference>
<dbReference type="RefSeq" id="XP_641095.1">
    <property type="nucleotide sequence ID" value="XM_636003.1"/>
</dbReference>
<dbReference type="PaxDb" id="44689-DDB0206090"/>
<dbReference type="EnsemblProtists" id="EAL67122">
    <property type="protein sequence ID" value="EAL67122"/>
    <property type="gene ID" value="DDB_G0280641"/>
</dbReference>
<dbReference type="GeneID" id="8622654"/>
<dbReference type="KEGG" id="ddi:DDB_G0280641"/>
<dbReference type="dictyBase" id="DDB_G0280641"/>
<dbReference type="VEuPathDB" id="AmoebaDB:DDB_G0280641"/>
<dbReference type="HOGENOM" id="CLU_3192442_0_0_1"/>
<dbReference type="InParanoid" id="Q54V36"/>
<dbReference type="PRO" id="PR:Q54V36"/>
<dbReference type="Proteomes" id="UP000002195">
    <property type="component" value="Chromosome 3"/>
</dbReference>
<feature type="chain" id="PRO_0000352448" description="Putative uncharacterized protein DDB_G0280641">
    <location>
        <begin position="1"/>
        <end position="46"/>
    </location>
</feature>
<protein>
    <recommendedName>
        <fullName>Putative uncharacterized protein DDB_G0280641</fullName>
    </recommendedName>
</protein>
<sequence>MKRYKRMKSVVEFCLENEKTQHKNVIQIRCIDGVSFFNLYSYNLLT</sequence>
<accession>Q54V36</accession>
<proteinExistence type="predicted"/>